<name>Y384_CLOB6</name>
<gene>
    <name type="ordered locus">CLJ_B0384</name>
</gene>
<accession>C3KZE8</accession>
<proteinExistence type="inferred from homology"/>
<dbReference type="EMBL" id="CP001083">
    <property type="protein sequence ID" value="ACQ52133.1"/>
    <property type="molecule type" value="Genomic_DNA"/>
</dbReference>
<dbReference type="RefSeq" id="WP_003362780.1">
    <property type="nucleotide sequence ID" value="NC_012658.1"/>
</dbReference>
<dbReference type="SMR" id="C3KZE8"/>
<dbReference type="KEGG" id="cbi:CLJ_B0384"/>
<dbReference type="HOGENOM" id="CLU_046981_0_0_9"/>
<dbReference type="Proteomes" id="UP000002333">
    <property type="component" value="Chromosome"/>
</dbReference>
<dbReference type="Gene3D" id="1.20.1570.10">
    <property type="entry name" value="dip2346 domain like"/>
    <property type="match status" value="1"/>
</dbReference>
<dbReference type="Gene3D" id="3.10.630.10">
    <property type="entry name" value="dip2346 domain like"/>
    <property type="match status" value="1"/>
</dbReference>
<dbReference type="Gene3D" id="3.40.140.40">
    <property type="entry name" value="Domain of unknown function (DUF1846), C-terminal subdomain"/>
    <property type="match status" value="1"/>
</dbReference>
<dbReference type="HAMAP" id="MF_01567">
    <property type="entry name" value="UPF0371"/>
    <property type="match status" value="1"/>
</dbReference>
<dbReference type="InterPro" id="IPR014999">
    <property type="entry name" value="DUF1846"/>
</dbReference>
<dbReference type="InterPro" id="IPR048441">
    <property type="entry name" value="DUF1846_C"/>
</dbReference>
<dbReference type="InterPro" id="IPR048496">
    <property type="entry name" value="DUF1846_N"/>
</dbReference>
<dbReference type="NCBIfam" id="NF010184">
    <property type="entry name" value="PRK13663.1"/>
    <property type="match status" value="1"/>
</dbReference>
<dbReference type="Pfam" id="PF08903">
    <property type="entry name" value="DUF1846"/>
    <property type="match status" value="1"/>
</dbReference>
<dbReference type="Pfam" id="PF20921">
    <property type="entry name" value="DUF1846_C"/>
    <property type="match status" value="1"/>
</dbReference>
<dbReference type="PIRSF" id="PIRSF033132">
    <property type="entry name" value="DUF1846"/>
    <property type="match status" value="1"/>
</dbReference>
<reference key="1">
    <citation type="submission" date="2008-05" db="EMBL/GenBank/DDBJ databases">
        <title>Genome sequence of Clostridium botulinum Ba4 strain 657.</title>
        <authorList>
            <person name="Shrivastava S."/>
            <person name="Brown J.L."/>
            <person name="Bruce D."/>
            <person name="Detter C."/>
            <person name="Munk C."/>
            <person name="Smith L.A."/>
            <person name="Smith T.J."/>
            <person name="Sutton G."/>
            <person name="Brettin T.S."/>
        </authorList>
    </citation>
    <scope>NUCLEOTIDE SEQUENCE [LARGE SCALE GENOMIC DNA]</scope>
    <source>
        <strain>657 / Type Ba4</strain>
    </source>
</reference>
<organism>
    <name type="scientific">Clostridium botulinum (strain 657 / Type Ba4)</name>
    <dbReference type="NCBI Taxonomy" id="515621"/>
    <lineage>
        <taxon>Bacteria</taxon>
        <taxon>Bacillati</taxon>
        <taxon>Bacillota</taxon>
        <taxon>Clostridia</taxon>
        <taxon>Eubacteriales</taxon>
        <taxon>Clostridiaceae</taxon>
        <taxon>Clostridium</taxon>
    </lineage>
</organism>
<protein>
    <recommendedName>
        <fullName evidence="1">UPF0371 protein CLJ_B0384</fullName>
    </recommendedName>
</protein>
<feature type="chain" id="PRO_1000215519" description="UPF0371 protein CLJ_B0384">
    <location>
        <begin position="1"/>
        <end position="502"/>
    </location>
</feature>
<evidence type="ECO:0000255" key="1">
    <source>
        <dbReference type="HAMAP-Rule" id="MF_01567"/>
    </source>
</evidence>
<comment type="similarity">
    <text evidence="1">Belongs to the UPF0371 family.</text>
</comment>
<sequence length="502" mass="56694">MRIGFDHEKYLEEQSKYILERVNNYDKLYLEFGGKLLFDLHAKRVLPGFDENAKIKLLHKLKEKVEIIICLYAGDIERNKIRGDFGITYDVDVLRLIDDLRGYDLEVNSVVITRYSGQPATNIFINKLERRGIKVYKHEATKGYPTDVDTIVSDEGYGKNPYIETTKPIVVVTAPGPGSGKLATCLSQLYHEYKRGNVAGYSKFETFPVWNVPLKHPLNIAYESATVDLKDVNMIDSFHFDAYNKVAVNYNRDIESFPVLKRIIEKITGEESVYKSPTDMGVNRVGFGIVDDEVVKEASKQEIIRRAFKTACEYKKGYVDKETFHRAKLIMEEMNLKEEDRKVVIPAREYAAKLKERANKSETCTVVALELEDGTILTGRSSELMDGTAAVILNAVKHYANISDEIHLISPVILEPIINLKAKTLGSKRTALSCEEVLIALSICAATNPTAQVAMGRLPMLKGCQAHSTTILSTNEEQTFRKLGIDVTCDPEYISESLYYNN</sequence>